<comment type="function">
    <text evidence="1 7 8">Receptor for retinoic acid. Retinoic acid receptors bind as heterodimers to their target response elements in response to their ligands, all-trans or 9-cis retinoic acid, and regulate gene expression in various biological processes. The rar/rxr heterodimers bind to the retinoic acid response elements (RARE) composed of tandem 5'-AGGTCA-3' sites known as DR1-DR5 (By similarity). Required for primary neurogenesis and for anteroposterior neural patterning.</text>
</comment>
<comment type="subunit">
    <text evidence="1">Heterodimer; with an rxr molecule. Binds DNA preferentially as a rar/rxr heterodimer (By similarity).</text>
</comment>
<comment type="subcellular location">
    <subcellularLocation>
        <location evidence="3">Nucleus</location>
    </subcellularLocation>
</comment>
<comment type="developmental stage">
    <text evidence="6">It is synthesized during oogenesis and persists in the cleaving embryo at approximately constant levels until it is degraded just before gastrulation.</text>
</comment>
<comment type="domain">
    <text>Composed of three domains: a modulating N-terminal domain, a DNA-binding domain and a C-terminal ligand-binding domain.</text>
</comment>
<comment type="domain">
    <text evidence="2">The 9aaTAD motif is a transactivation domain present in a large number of yeast and animal transcription factors.</text>
</comment>
<comment type="similarity">
    <text evidence="9">Belongs to the nuclear hormone receptor family. NR1 subfamily.</text>
</comment>
<dbReference type="EMBL" id="L11445">
    <property type="status" value="NOT_ANNOTATED_CDS"/>
    <property type="molecule type" value="mRNA"/>
</dbReference>
<dbReference type="PIR" id="A41977">
    <property type="entry name" value="A41977"/>
</dbReference>
<dbReference type="AGR" id="Xenbase:XB-GENE-17333377"/>
<dbReference type="Xenbase" id="XB-GENE-17333377">
    <property type="gene designation" value="rara.S"/>
</dbReference>
<dbReference type="Proteomes" id="UP000186698">
    <property type="component" value="Unplaced"/>
</dbReference>
<dbReference type="GO" id="GO:0005634">
    <property type="term" value="C:nucleus"/>
    <property type="evidence" value="ECO:0000318"/>
    <property type="project" value="GO_Central"/>
</dbReference>
<dbReference type="GO" id="GO:0005667">
    <property type="term" value="C:transcription regulator complex"/>
    <property type="evidence" value="ECO:0000318"/>
    <property type="project" value="GO_Central"/>
</dbReference>
<dbReference type="GO" id="GO:0000981">
    <property type="term" value="F:DNA-binding transcription factor activity, RNA polymerase II-specific"/>
    <property type="evidence" value="ECO:0000318"/>
    <property type="project" value="GO_Central"/>
</dbReference>
<dbReference type="GO" id="GO:0035259">
    <property type="term" value="F:nuclear glucocorticoid receptor binding"/>
    <property type="evidence" value="ECO:0000318"/>
    <property type="project" value="GO_Central"/>
</dbReference>
<dbReference type="GO" id="GO:0004879">
    <property type="term" value="F:nuclear receptor activity"/>
    <property type="evidence" value="ECO:0007669"/>
    <property type="project" value="InterPro"/>
</dbReference>
<dbReference type="GO" id="GO:0000978">
    <property type="term" value="F:RNA polymerase II cis-regulatory region sequence-specific DNA binding"/>
    <property type="evidence" value="ECO:0000318"/>
    <property type="project" value="GO_Central"/>
</dbReference>
<dbReference type="GO" id="GO:0008270">
    <property type="term" value="F:zinc ion binding"/>
    <property type="evidence" value="ECO:0007669"/>
    <property type="project" value="UniProtKB-KW"/>
</dbReference>
<dbReference type="GO" id="GO:0071376">
    <property type="term" value="P:cellular response to corticotropin-releasing hormone stimulus"/>
    <property type="evidence" value="ECO:0000318"/>
    <property type="project" value="GO_Central"/>
</dbReference>
<dbReference type="GO" id="GO:0021955">
    <property type="term" value="P:central nervous system neuron axonogenesis"/>
    <property type="evidence" value="ECO:0000315"/>
    <property type="project" value="UniProtKB"/>
</dbReference>
<dbReference type="GO" id="GO:0006351">
    <property type="term" value="P:DNA-templated transcription"/>
    <property type="evidence" value="ECO:0000315"/>
    <property type="project" value="UniProtKB"/>
</dbReference>
<dbReference type="GO" id="GO:0050769">
    <property type="term" value="P:positive regulation of neurogenesis"/>
    <property type="evidence" value="ECO:0000315"/>
    <property type="project" value="UniProtKB"/>
</dbReference>
<dbReference type="GO" id="GO:0006357">
    <property type="term" value="P:regulation of transcription by RNA polymerase II"/>
    <property type="evidence" value="ECO:0000318"/>
    <property type="project" value="GO_Central"/>
</dbReference>
<dbReference type="GO" id="GO:0048384">
    <property type="term" value="P:retinoic acid receptor signaling pathway"/>
    <property type="evidence" value="ECO:0000315"/>
    <property type="project" value="UniProtKB"/>
</dbReference>
<dbReference type="CDD" id="cd06964">
    <property type="entry name" value="NR_DBD_RAR"/>
    <property type="match status" value="1"/>
</dbReference>
<dbReference type="CDD" id="cd06937">
    <property type="entry name" value="NR_LBD_RAR"/>
    <property type="match status" value="1"/>
</dbReference>
<dbReference type="FunFam" id="1.10.565.10:FF:000073">
    <property type="entry name" value="Retinoic acid receptor beta"/>
    <property type="match status" value="1"/>
</dbReference>
<dbReference type="FunFam" id="3.30.50.10:FF:000004">
    <property type="entry name" value="Retinoic acid receptor beta isoform"/>
    <property type="match status" value="1"/>
</dbReference>
<dbReference type="Gene3D" id="3.30.50.10">
    <property type="entry name" value="Erythroid Transcription Factor GATA-1, subunit A"/>
    <property type="match status" value="1"/>
</dbReference>
<dbReference type="Gene3D" id="1.10.565.10">
    <property type="entry name" value="Retinoid X Receptor"/>
    <property type="match status" value="1"/>
</dbReference>
<dbReference type="InterPro" id="IPR035500">
    <property type="entry name" value="NHR-like_dom_sf"/>
</dbReference>
<dbReference type="InterPro" id="IPR047159">
    <property type="entry name" value="NR_DBD_RAR"/>
</dbReference>
<dbReference type="InterPro" id="IPR047158">
    <property type="entry name" value="NR_LBD_RAR"/>
</dbReference>
<dbReference type="InterPro" id="IPR000536">
    <property type="entry name" value="Nucl_hrmn_rcpt_lig-bd"/>
</dbReference>
<dbReference type="InterPro" id="IPR001723">
    <property type="entry name" value="Nuclear_hrmn_rcpt"/>
</dbReference>
<dbReference type="InterPro" id="IPR003078">
    <property type="entry name" value="Retinoic_acid_rcpt"/>
</dbReference>
<dbReference type="InterPro" id="IPR001628">
    <property type="entry name" value="Znf_hrmn_rcpt"/>
</dbReference>
<dbReference type="InterPro" id="IPR013088">
    <property type="entry name" value="Znf_NHR/GATA"/>
</dbReference>
<dbReference type="PANTHER" id="PTHR24085">
    <property type="entry name" value="NUCLEAR HORMONE RECEPTOR"/>
    <property type="match status" value="1"/>
</dbReference>
<dbReference type="PANTHER" id="PTHR24085:SF8">
    <property type="entry name" value="RETINOIC ACID RECEPTOR ALPHA"/>
    <property type="match status" value="1"/>
</dbReference>
<dbReference type="Pfam" id="PF00104">
    <property type="entry name" value="Hormone_recep"/>
    <property type="match status" value="1"/>
</dbReference>
<dbReference type="Pfam" id="PF00105">
    <property type="entry name" value="zf-C4"/>
    <property type="match status" value="1"/>
</dbReference>
<dbReference type="PRINTS" id="PR01292">
    <property type="entry name" value="RETNOICACIDR"/>
</dbReference>
<dbReference type="PRINTS" id="PR00398">
    <property type="entry name" value="STRDHORMONER"/>
</dbReference>
<dbReference type="PRINTS" id="PR00047">
    <property type="entry name" value="STROIDFINGER"/>
</dbReference>
<dbReference type="SMART" id="SM00430">
    <property type="entry name" value="HOLI"/>
    <property type="match status" value="1"/>
</dbReference>
<dbReference type="SMART" id="SM00399">
    <property type="entry name" value="ZnF_C4"/>
    <property type="match status" value="1"/>
</dbReference>
<dbReference type="SUPFAM" id="SSF57716">
    <property type="entry name" value="Glucocorticoid receptor-like (DNA-binding domain)"/>
    <property type="match status" value="1"/>
</dbReference>
<dbReference type="SUPFAM" id="SSF48508">
    <property type="entry name" value="Nuclear receptor ligand-binding domain"/>
    <property type="match status" value="1"/>
</dbReference>
<dbReference type="PROSITE" id="PS51843">
    <property type="entry name" value="NR_LBD"/>
    <property type="match status" value="1"/>
</dbReference>
<dbReference type="PROSITE" id="PS00031">
    <property type="entry name" value="NUCLEAR_REC_DBD_1"/>
    <property type="match status" value="1"/>
</dbReference>
<dbReference type="PROSITE" id="PS51030">
    <property type="entry name" value="NUCLEAR_REC_DBD_2"/>
    <property type="match status" value="1"/>
</dbReference>
<reference key="1">
    <citation type="journal article" date="1992" name="Proc. Natl. Acad. Sci. U.S.A.">
        <title>Multiple retinoid-responsive receptors in a single cell: families of retinoid 'X' receptors and retinoic acid receptors in the Xenopus egg.</title>
        <authorList>
            <person name="Blumberg B."/>
            <person name="Mangelsdorf D.J."/>
            <person name="Dyck J.A."/>
            <person name="Bittner D.A."/>
            <person name="Evans R.M."/>
            <person name="De Robertis E.M."/>
        </authorList>
    </citation>
    <scope>NUCLEOTIDE SEQUENCE [MRNA]</scope>
    <scope>DEVELOPMENTAL STAGE</scope>
</reference>
<reference key="2">
    <citation type="journal article" date="1997" name="Development">
        <title>An essential role for retinoid signaling in anteroposterior neural patterning.</title>
        <authorList>
            <person name="Blumberg B."/>
            <person name="Bolado J. Jr."/>
            <person name="Moreno T.A."/>
            <person name="Kintner C."/>
            <person name="Evans R.M."/>
            <person name="Papalopulu N."/>
        </authorList>
    </citation>
    <scope>FUNCTION</scope>
    <scope>HETERODIMERIZATION</scope>
</reference>
<reference key="3">
    <citation type="journal article" date="1997" name="Development">
        <title>Retinoid receptors promote primary neurogenesis in Xenopus.</title>
        <authorList>
            <person name="Sharpe C.R."/>
            <person name="Goldstone K."/>
        </authorList>
    </citation>
    <scope>FUNCTION</scope>
    <scope>HETERODIMERIZATION</scope>
</reference>
<feature type="chain" id="PRO_0000053466" description="Retinoic acid receptor alpha">
    <location>
        <begin position="1"/>
        <end position="458"/>
    </location>
</feature>
<feature type="domain" description="NR LBD" evidence="4">
    <location>
        <begin position="183"/>
        <end position="417"/>
    </location>
</feature>
<feature type="DNA-binding region" description="Nuclear receptor" evidence="3">
    <location>
        <begin position="88"/>
        <end position="153"/>
    </location>
</feature>
<feature type="zinc finger region" description="NR C4-type" evidence="3">
    <location>
        <begin position="88"/>
        <end position="108"/>
    </location>
</feature>
<feature type="zinc finger region" description="NR C4-type" evidence="3">
    <location>
        <begin position="124"/>
        <end position="148"/>
    </location>
</feature>
<feature type="region of interest" description="Modulating" evidence="1">
    <location>
        <begin position="1"/>
        <end position="87"/>
    </location>
</feature>
<feature type="region of interest" description="Disordered" evidence="5">
    <location>
        <begin position="39"/>
        <end position="78"/>
    </location>
</feature>
<feature type="region of interest" description="Hinge">
    <location>
        <begin position="154"/>
        <end position="182"/>
    </location>
</feature>
<feature type="region of interest" description="Disordered" evidence="5">
    <location>
        <begin position="419"/>
        <end position="458"/>
    </location>
</feature>
<feature type="short sequence motif" description="9aaTAD" evidence="2">
    <location>
        <begin position="407"/>
        <end position="415"/>
    </location>
</feature>
<feature type="compositionally biased region" description="Polar residues" evidence="5">
    <location>
        <begin position="52"/>
        <end position="69"/>
    </location>
</feature>
<feature type="compositionally biased region" description="Low complexity" evidence="5">
    <location>
        <begin position="439"/>
        <end position="458"/>
    </location>
</feature>
<organism>
    <name type="scientific">Xenopus laevis</name>
    <name type="common">African clawed frog</name>
    <dbReference type="NCBI Taxonomy" id="8355"/>
    <lineage>
        <taxon>Eukaryota</taxon>
        <taxon>Metazoa</taxon>
        <taxon>Chordata</taxon>
        <taxon>Craniata</taxon>
        <taxon>Vertebrata</taxon>
        <taxon>Euteleostomi</taxon>
        <taxon>Amphibia</taxon>
        <taxon>Batrachia</taxon>
        <taxon>Anura</taxon>
        <taxon>Pipoidea</taxon>
        <taxon>Pipidae</taxon>
        <taxon>Xenopodinae</taxon>
        <taxon>Xenopus</taxon>
        <taxon>Xenopus</taxon>
    </lineage>
</organism>
<gene>
    <name type="primary">rara</name>
    <name type="synonym">nr1b1</name>
</gene>
<name>RARA_XENLA</name>
<keyword id="KW-0238">DNA-binding</keyword>
<keyword id="KW-0479">Metal-binding</keyword>
<keyword id="KW-0539">Nucleus</keyword>
<keyword id="KW-0675">Receptor</keyword>
<keyword id="KW-1185">Reference proteome</keyword>
<keyword id="KW-0804">Transcription</keyword>
<keyword id="KW-0805">Transcription regulation</keyword>
<keyword id="KW-0862">Zinc</keyword>
<keyword id="KW-0863">Zinc-finger</keyword>
<proteinExistence type="evidence at transcript level"/>
<protein>
    <recommendedName>
        <fullName>Retinoic acid receptor alpha</fullName>
        <shortName>RAR-alpha</shortName>
    </recommendedName>
    <alternativeName>
        <fullName>Nuclear receptor subfamily 1 group B member 1</fullName>
    </alternativeName>
</protein>
<sequence>MSSKDNTCPPPGPGHINGFHVPHYAFFFPHMLGGMSXTGGLPGVQHQPPLSGYSTPSPATIETQSTSSEEIVPSPPTPPPLPRIYKPCFVCQDKSSGYHYGVSACEGCKGFFRRSIQKNMVYTCHRDKNCIINKVTRNRCQYCRLQKCFEVGMSKESVRNDRNKKKKESPKPEAIESYILSPETQDLIEKVQKAHQETFPALCQLGKYTTSFSSEQRVSLDIDLWDKFSELSTKCIIKTVEFAKQLPGFTTLTIADQITLLKSACLDILILRICTRYTPDQDTMTFSDGLTLNRTQMHNAGFGPLTDLVFAFANQPVPLEMDDAETGLLSAICLICGDRQDLEQPDKVDKLQEPLLEALKIYVRTRRPQKPHMFPKMLMKITDLRTVSAKGAERVITLKMEIPGAMPLIQEMLENSEGLDTLGGGASSDAPVTPVAPGSCSPSLSPSSTHSSPSTHSP</sequence>
<evidence type="ECO:0000250" key="1"/>
<evidence type="ECO:0000250" key="2">
    <source>
        <dbReference type="UniProtKB" id="P10276"/>
    </source>
</evidence>
<evidence type="ECO:0000255" key="3">
    <source>
        <dbReference type="PROSITE-ProRule" id="PRU00407"/>
    </source>
</evidence>
<evidence type="ECO:0000255" key="4">
    <source>
        <dbReference type="PROSITE-ProRule" id="PRU01189"/>
    </source>
</evidence>
<evidence type="ECO:0000256" key="5">
    <source>
        <dbReference type="SAM" id="MobiDB-lite"/>
    </source>
</evidence>
<evidence type="ECO:0000269" key="6">
    <source>
    </source>
</evidence>
<evidence type="ECO:0000269" key="7">
    <source>
    </source>
</evidence>
<evidence type="ECO:0000269" key="8">
    <source>
    </source>
</evidence>
<evidence type="ECO:0000305" key="9"/>
<accession>P51126</accession>